<protein>
    <recommendedName>
        <fullName evidence="1">Exodeoxyribonuclease 7 small subunit</fullName>
        <ecNumber evidence="1">3.1.11.6</ecNumber>
    </recommendedName>
    <alternativeName>
        <fullName evidence="1">Exodeoxyribonuclease VII small subunit</fullName>
        <shortName evidence="1">Exonuclease VII small subunit</shortName>
    </alternativeName>
</protein>
<organism>
    <name type="scientific">Salmonella gallinarum (strain 287/91 / NCTC 13346)</name>
    <dbReference type="NCBI Taxonomy" id="550538"/>
    <lineage>
        <taxon>Bacteria</taxon>
        <taxon>Pseudomonadati</taxon>
        <taxon>Pseudomonadota</taxon>
        <taxon>Gammaproteobacteria</taxon>
        <taxon>Enterobacterales</taxon>
        <taxon>Enterobacteriaceae</taxon>
        <taxon>Salmonella</taxon>
    </lineage>
</organism>
<proteinExistence type="inferred from homology"/>
<sequence>MPKKNEAPASFETALSELEHIVTRLESGDLPLEDALNEFERGVQLARQGQAKLQQAEQRVQILLSDNEEASPEPFIADNE</sequence>
<reference key="1">
    <citation type="journal article" date="2008" name="Genome Res.">
        <title>Comparative genome analysis of Salmonella enteritidis PT4 and Salmonella gallinarum 287/91 provides insights into evolutionary and host adaptation pathways.</title>
        <authorList>
            <person name="Thomson N.R."/>
            <person name="Clayton D.J."/>
            <person name="Windhorst D."/>
            <person name="Vernikos G."/>
            <person name="Davidson S."/>
            <person name="Churcher C."/>
            <person name="Quail M.A."/>
            <person name="Stevens M."/>
            <person name="Jones M.A."/>
            <person name="Watson M."/>
            <person name="Barron A."/>
            <person name="Layton A."/>
            <person name="Pickard D."/>
            <person name="Kingsley R.A."/>
            <person name="Bignell A."/>
            <person name="Clark L."/>
            <person name="Harris B."/>
            <person name="Ormond D."/>
            <person name="Abdellah Z."/>
            <person name="Brooks K."/>
            <person name="Cherevach I."/>
            <person name="Chillingworth T."/>
            <person name="Woodward J."/>
            <person name="Norberczak H."/>
            <person name="Lord A."/>
            <person name="Arrowsmith C."/>
            <person name="Jagels K."/>
            <person name="Moule S."/>
            <person name="Mungall K."/>
            <person name="Saunders M."/>
            <person name="Whitehead S."/>
            <person name="Chabalgoity J.A."/>
            <person name="Maskell D."/>
            <person name="Humphreys T."/>
            <person name="Roberts M."/>
            <person name="Barrow P.A."/>
            <person name="Dougan G."/>
            <person name="Parkhill J."/>
        </authorList>
    </citation>
    <scope>NUCLEOTIDE SEQUENCE [LARGE SCALE GENOMIC DNA]</scope>
    <source>
        <strain>287/91 / NCTC 13346</strain>
    </source>
</reference>
<evidence type="ECO:0000255" key="1">
    <source>
        <dbReference type="HAMAP-Rule" id="MF_00337"/>
    </source>
</evidence>
<accession>B5R6S5</accession>
<dbReference type="EC" id="3.1.11.6" evidence="1"/>
<dbReference type="EMBL" id="AM933173">
    <property type="protein sequence ID" value="CAR36334.1"/>
    <property type="molecule type" value="Genomic_DNA"/>
</dbReference>
<dbReference type="RefSeq" id="WP_001124944.1">
    <property type="nucleotide sequence ID" value="NC_011274.1"/>
</dbReference>
<dbReference type="SMR" id="B5R6S5"/>
<dbReference type="KEGG" id="seg:SG0435"/>
<dbReference type="HOGENOM" id="CLU_145918_3_3_6"/>
<dbReference type="Proteomes" id="UP000008321">
    <property type="component" value="Chromosome"/>
</dbReference>
<dbReference type="GO" id="GO:0005829">
    <property type="term" value="C:cytosol"/>
    <property type="evidence" value="ECO:0007669"/>
    <property type="project" value="TreeGrafter"/>
</dbReference>
<dbReference type="GO" id="GO:0009318">
    <property type="term" value="C:exodeoxyribonuclease VII complex"/>
    <property type="evidence" value="ECO:0007669"/>
    <property type="project" value="InterPro"/>
</dbReference>
<dbReference type="GO" id="GO:0008855">
    <property type="term" value="F:exodeoxyribonuclease VII activity"/>
    <property type="evidence" value="ECO:0007669"/>
    <property type="project" value="UniProtKB-UniRule"/>
</dbReference>
<dbReference type="GO" id="GO:0006308">
    <property type="term" value="P:DNA catabolic process"/>
    <property type="evidence" value="ECO:0007669"/>
    <property type="project" value="UniProtKB-UniRule"/>
</dbReference>
<dbReference type="FunFam" id="1.10.287.1040:FF:000001">
    <property type="entry name" value="Exodeoxyribonuclease 7 small subunit"/>
    <property type="match status" value="1"/>
</dbReference>
<dbReference type="Gene3D" id="1.10.287.1040">
    <property type="entry name" value="Exonuclease VII, small subunit"/>
    <property type="match status" value="1"/>
</dbReference>
<dbReference type="HAMAP" id="MF_00337">
    <property type="entry name" value="Exonuc_7_S"/>
    <property type="match status" value="1"/>
</dbReference>
<dbReference type="InterPro" id="IPR003761">
    <property type="entry name" value="Exonuc_VII_S"/>
</dbReference>
<dbReference type="InterPro" id="IPR037004">
    <property type="entry name" value="Exonuc_VII_ssu_sf"/>
</dbReference>
<dbReference type="NCBIfam" id="NF002137">
    <property type="entry name" value="PRK00977.1-1"/>
    <property type="match status" value="1"/>
</dbReference>
<dbReference type="NCBIfam" id="NF002140">
    <property type="entry name" value="PRK00977.1-4"/>
    <property type="match status" value="1"/>
</dbReference>
<dbReference type="NCBIfam" id="TIGR01280">
    <property type="entry name" value="xseB"/>
    <property type="match status" value="1"/>
</dbReference>
<dbReference type="PANTHER" id="PTHR34137">
    <property type="entry name" value="EXODEOXYRIBONUCLEASE 7 SMALL SUBUNIT"/>
    <property type="match status" value="1"/>
</dbReference>
<dbReference type="PANTHER" id="PTHR34137:SF1">
    <property type="entry name" value="EXODEOXYRIBONUCLEASE 7 SMALL SUBUNIT"/>
    <property type="match status" value="1"/>
</dbReference>
<dbReference type="Pfam" id="PF02609">
    <property type="entry name" value="Exonuc_VII_S"/>
    <property type="match status" value="1"/>
</dbReference>
<dbReference type="PIRSF" id="PIRSF006488">
    <property type="entry name" value="Exonuc_VII_S"/>
    <property type="match status" value="1"/>
</dbReference>
<dbReference type="SUPFAM" id="SSF116842">
    <property type="entry name" value="XseB-like"/>
    <property type="match status" value="1"/>
</dbReference>
<gene>
    <name evidence="1" type="primary">xseB</name>
    <name type="ordered locus">SG0435</name>
</gene>
<comment type="function">
    <text evidence="1">Bidirectionally degrades single-stranded DNA into large acid-insoluble oligonucleotides, which are then degraded further into small acid-soluble oligonucleotides.</text>
</comment>
<comment type="catalytic activity">
    <reaction evidence="1">
        <text>Exonucleolytic cleavage in either 5'- to 3'- or 3'- to 5'-direction to yield nucleoside 5'-phosphates.</text>
        <dbReference type="EC" id="3.1.11.6"/>
    </reaction>
</comment>
<comment type="subunit">
    <text evidence="1">Heterooligomer composed of large and small subunits.</text>
</comment>
<comment type="subcellular location">
    <subcellularLocation>
        <location evidence="1">Cytoplasm</location>
    </subcellularLocation>
</comment>
<comment type="similarity">
    <text evidence="1">Belongs to the XseB family.</text>
</comment>
<keyword id="KW-0963">Cytoplasm</keyword>
<keyword id="KW-0269">Exonuclease</keyword>
<keyword id="KW-0378">Hydrolase</keyword>
<keyword id="KW-0540">Nuclease</keyword>
<name>EX7S_SALG2</name>
<feature type="chain" id="PRO_1000119952" description="Exodeoxyribonuclease 7 small subunit">
    <location>
        <begin position="1"/>
        <end position="80"/>
    </location>
</feature>